<name>STMN1_BOVIN</name>
<proteinExistence type="evidence at transcript level"/>
<gene>
    <name type="primary">STMN1</name>
</gene>
<evidence type="ECO:0000250" key="1"/>
<evidence type="ECO:0000250" key="2">
    <source>
        <dbReference type="UniProtKB" id="P16949"/>
    </source>
</evidence>
<evidence type="ECO:0000250" key="3">
    <source>
        <dbReference type="UniProtKB" id="P54227"/>
    </source>
</evidence>
<evidence type="ECO:0000255" key="4"/>
<evidence type="ECO:0000255" key="5">
    <source>
        <dbReference type="PROSITE-ProRule" id="PRU00998"/>
    </source>
</evidence>
<evidence type="ECO:0000256" key="6">
    <source>
        <dbReference type="SAM" id="MobiDB-lite"/>
    </source>
</evidence>
<evidence type="ECO:0000305" key="7"/>
<dbReference type="EMBL" id="BC102453">
    <property type="protein sequence ID" value="AAI02454.1"/>
    <property type="molecule type" value="mRNA"/>
</dbReference>
<dbReference type="RefSeq" id="NP_001029962.1">
    <property type="nucleotide sequence ID" value="NM_001034790.2"/>
</dbReference>
<dbReference type="RefSeq" id="XP_005203304.1">
    <property type="nucleotide sequence ID" value="XM_005203247.3"/>
</dbReference>
<dbReference type="RefSeq" id="XP_015316021.1">
    <property type="nucleotide sequence ID" value="XM_015460535.1"/>
</dbReference>
<dbReference type="RefSeq" id="XP_015316025.1">
    <property type="nucleotide sequence ID" value="XM_015460539.1"/>
</dbReference>
<dbReference type="SMR" id="Q3T0C7"/>
<dbReference type="CORUM" id="Q3T0C7"/>
<dbReference type="FunCoup" id="Q3T0C7">
    <property type="interactions" value="1900"/>
</dbReference>
<dbReference type="STRING" id="9913.ENSBTAP00000052803"/>
<dbReference type="iPTMnet" id="Q3T0C7"/>
<dbReference type="PaxDb" id="9913-ENSBTAP00000018284"/>
<dbReference type="PeptideAtlas" id="Q3T0C7"/>
<dbReference type="Ensembl" id="ENSBTAT00000018284.5">
    <property type="protein sequence ID" value="ENSBTAP00000018284.3"/>
    <property type="gene ID" value="ENSBTAG00000013761.5"/>
</dbReference>
<dbReference type="GeneID" id="616317"/>
<dbReference type="KEGG" id="bta:616317"/>
<dbReference type="CTD" id="3925"/>
<dbReference type="VEuPathDB" id="HostDB:ENSBTAG00000013761"/>
<dbReference type="eggNOG" id="KOG1280">
    <property type="taxonomic scope" value="Eukaryota"/>
</dbReference>
<dbReference type="GeneTree" id="ENSGT01030000234597"/>
<dbReference type="HOGENOM" id="CLU_102026_1_1_1"/>
<dbReference type="InParanoid" id="Q3T0C7"/>
<dbReference type="OMA" id="RKSHEAM"/>
<dbReference type="OrthoDB" id="5986631at2759"/>
<dbReference type="TreeFam" id="TF326935"/>
<dbReference type="Proteomes" id="UP000009136">
    <property type="component" value="Chromosome 2"/>
</dbReference>
<dbReference type="Bgee" id="ENSBTAG00000013761">
    <property type="expression patterns" value="Expressed in floor plate of diencephalon and 104 other cell types or tissues"/>
</dbReference>
<dbReference type="GO" id="GO:0005737">
    <property type="term" value="C:cytoplasm"/>
    <property type="evidence" value="ECO:0000318"/>
    <property type="project" value="GO_Central"/>
</dbReference>
<dbReference type="GO" id="GO:0005874">
    <property type="term" value="C:microtubule"/>
    <property type="evidence" value="ECO:0007669"/>
    <property type="project" value="UniProtKB-KW"/>
</dbReference>
<dbReference type="GO" id="GO:0043005">
    <property type="term" value="C:neuron projection"/>
    <property type="evidence" value="ECO:0000318"/>
    <property type="project" value="GO_Central"/>
</dbReference>
<dbReference type="GO" id="GO:0015631">
    <property type="term" value="F:tubulin binding"/>
    <property type="evidence" value="ECO:0000318"/>
    <property type="project" value="GO_Central"/>
</dbReference>
<dbReference type="GO" id="GO:0007019">
    <property type="term" value="P:microtubule depolymerization"/>
    <property type="evidence" value="ECO:0000318"/>
    <property type="project" value="GO_Central"/>
</dbReference>
<dbReference type="GO" id="GO:0031175">
    <property type="term" value="P:neuron projection development"/>
    <property type="evidence" value="ECO:0000318"/>
    <property type="project" value="GO_Central"/>
</dbReference>
<dbReference type="GO" id="GO:0031110">
    <property type="term" value="P:regulation of microtubule polymerization or depolymerization"/>
    <property type="evidence" value="ECO:0000318"/>
    <property type="project" value="GO_Central"/>
</dbReference>
<dbReference type="Gene3D" id="6.10.280.30">
    <property type="match status" value="1"/>
</dbReference>
<dbReference type="InterPro" id="IPR030514">
    <property type="entry name" value="Stathmin_CS"/>
</dbReference>
<dbReference type="InterPro" id="IPR000956">
    <property type="entry name" value="Stathmin_fam"/>
</dbReference>
<dbReference type="InterPro" id="IPR036002">
    <property type="entry name" value="Stathmin_sf"/>
</dbReference>
<dbReference type="PANTHER" id="PTHR10104">
    <property type="entry name" value="STATHMIN"/>
    <property type="match status" value="1"/>
</dbReference>
<dbReference type="PANTHER" id="PTHR10104:SF5">
    <property type="entry name" value="STATHMIN"/>
    <property type="match status" value="1"/>
</dbReference>
<dbReference type="Pfam" id="PF00836">
    <property type="entry name" value="Stathmin"/>
    <property type="match status" value="1"/>
</dbReference>
<dbReference type="PIRSF" id="PIRSF002285">
    <property type="entry name" value="Stathmin"/>
    <property type="match status" value="1"/>
</dbReference>
<dbReference type="PRINTS" id="PR00345">
    <property type="entry name" value="STATHMIN"/>
</dbReference>
<dbReference type="SUPFAM" id="SSF101494">
    <property type="entry name" value="Stathmin"/>
    <property type="match status" value="1"/>
</dbReference>
<dbReference type="PROSITE" id="PS00563">
    <property type="entry name" value="STATHMIN_1"/>
    <property type="match status" value="1"/>
</dbReference>
<dbReference type="PROSITE" id="PS01041">
    <property type="entry name" value="STATHMIN_2"/>
    <property type="match status" value="1"/>
</dbReference>
<dbReference type="PROSITE" id="PS51663">
    <property type="entry name" value="STATHMIN_3"/>
    <property type="match status" value="1"/>
</dbReference>
<protein>
    <recommendedName>
        <fullName>Stathmin</fullName>
    </recommendedName>
</protein>
<sequence length="149" mass="17303">MASSDIQVKELEKRASGQAFELILSPRSKESVPEFPLSPPKKKDLSLEEIQKKLEAAEERRKSHEAEVLKQLAEKREHEKEVLQKAIEENNNFSKMAEEKLTHKMEANKENREAQMAAKLERLREKDKHIEEVRKNKESKDPADETEAD</sequence>
<accession>Q3T0C7</accession>
<comment type="function">
    <text evidence="1">Involved in the regulation of the microtubule (MT) filament system by destabilizing microtubules. Prevents assembly and promotes disassembly of microtubules (By similarity). Its phosphorylation at Ser-16 may be required for axon formation during neurogenesis. Involved in the control of the learned and innate fear (By similarity).</text>
</comment>
<comment type="subunit">
    <text evidence="1">Binds to two alpha/beta-tubulin heterodimers. Interacts with KIST (By similarity).</text>
</comment>
<comment type="subcellular location">
    <subcellularLocation>
        <location evidence="1">Cytoplasm</location>
        <location evidence="1">Cytoskeleton</location>
    </subcellularLocation>
</comment>
<comment type="PTM">
    <text evidence="1">Many different phosphorylated forms are observed depending on specific combinations among the sites which can be phosphorylated. MAPK is responsible for the phosphorylation of stathmin in response to NGF. Phosphorylation at Ser-16 seems to be required for neuron polarization (By similarity).</text>
</comment>
<comment type="similarity">
    <text evidence="7">Belongs to the stathmin family.</text>
</comment>
<organism>
    <name type="scientific">Bos taurus</name>
    <name type="common">Bovine</name>
    <dbReference type="NCBI Taxonomy" id="9913"/>
    <lineage>
        <taxon>Eukaryota</taxon>
        <taxon>Metazoa</taxon>
        <taxon>Chordata</taxon>
        <taxon>Craniata</taxon>
        <taxon>Vertebrata</taxon>
        <taxon>Euteleostomi</taxon>
        <taxon>Mammalia</taxon>
        <taxon>Eutheria</taxon>
        <taxon>Laurasiatheria</taxon>
        <taxon>Artiodactyla</taxon>
        <taxon>Ruminantia</taxon>
        <taxon>Pecora</taxon>
        <taxon>Bovidae</taxon>
        <taxon>Bovinae</taxon>
        <taxon>Bos</taxon>
    </lineage>
</organism>
<feature type="initiator methionine" description="Removed" evidence="2">
    <location>
        <position position="1"/>
    </location>
</feature>
<feature type="chain" id="PRO_0000182388" description="Stathmin">
    <location>
        <begin position="2"/>
        <end position="149"/>
    </location>
</feature>
<feature type="domain" description="SLD" evidence="5">
    <location>
        <begin position="4"/>
        <end position="145"/>
    </location>
</feature>
<feature type="region of interest" description="Disordered" evidence="6">
    <location>
        <begin position="121"/>
        <end position="149"/>
    </location>
</feature>
<feature type="coiled-coil region" evidence="4">
    <location>
        <begin position="41"/>
        <end position="140"/>
    </location>
</feature>
<feature type="compositionally biased region" description="Basic and acidic residues" evidence="6">
    <location>
        <begin position="121"/>
        <end position="143"/>
    </location>
</feature>
<feature type="modified residue" description="N-acetylalanine" evidence="2">
    <location>
        <position position="2"/>
    </location>
</feature>
<feature type="modified residue" description="Phosphoserine" evidence="2">
    <location>
        <position position="4"/>
    </location>
</feature>
<feature type="modified residue" description="N6-acetyllysine" evidence="2">
    <location>
        <position position="9"/>
    </location>
</feature>
<feature type="modified residue" description="Phosphoserine" evidence="3">
    <location>
        <position position="16"/>
    </location>
</feature>
<feature type="modified residue" description="Phosphoserine; by CDK1, MAPK1 and MAPK3" evidence="2">
    <location>
        <position position="25"/>
    </location>
</feature>
<feature type="modified residue" description="N6-methyllysine" evidence="2">
    <location>
        <position position="29"/>
    </location>
</feature>
<feature type="modified residue" description="Phosphoserine" evidence="2">
    <location>
        <position position="31"/>
    </location>
</feature>
<feature type="modified residue" description="Phosphoserine; by CDK1, MAPK1 and MAPK3" evidence="2">
    <location>
        <position position="38"/>
    </location>
</feature>
<feature type="modified residue" description="Phosphoserine; by PKA" evidence="2">
    <location>
        <position position="63"/>
    </location>
</feature>
<feature type="modified residue" description="N6-acetyllysine" evidence="2">
    <location>
        <position position="100"/>
    </location>
</feature>
<feature type="modified residue" description="N6-acetyllysine" evidence="2">
    <location>
        <position position="119"/>
    </location>
</feature>
<keyword id="KW-0007">Acetylation</keyword>
<keyword id="KW-0175">Coiled coil</keyword>
<keyword id="KW-0963">Cytoplasm</keyword>
<keyword id="KW-0206">Cytoskeleton</keyword>
<keyword id="KW-0217">Developmental protein</keyword>
<keyword id="KW-0221">Differentiation</keyword>
<keyword id="KW-0488">Methylation</keyword>
<keyword id="KW-0493">Microtubule</keyword>
<keyword id="KW-0524">Neurogenesis</keyword>
<keyword id="KW-0597">Phosphoprotein</keyword>
<keyword id="KW-1185">Reference proteome</keyword>
<reference key="1">
    <citation type="submission" date="2005-08" db="EMBL/GenBank/DDBJ databases">
        <authorList>
            <consortium name="NIH - Mammalian Gene Collection (MGC) project"/>
        </authorList>
    </citation>
    <scope>NUCLEOTIDE SEQUENCE [LARGE SCALE MRNA]</scope>
    <source>
        <strain>Crossbred X Angus</strain>
        <tissue>Ileum</tissue>
    </source>
</reference>